<protein>
    <recommendedName>
        <fullName>PHD finger protein ALFIN-LIKE 6</fullName>
    </recommendedName>
</protein>
<keyword id="KW-0156">Chromatin regulator</keyword>
<keyword id="KW-0479">Metal-binding</keyword>
<keyword id="KW-0539">Nucleus</keyword>
<keyword id="KW-1185">Reference proteome</keyword>
<keyword id="KW-0804">Transcription</keyword>
<keyword id="KW-0805">Transcription regulation</keyword>
<keyword id="KW-0862">Zinc</keyword>
<keyword id="KW-0863">Zinc-finger</keyword>
<reference key="1">
    <citation type="submission" date="1998-12" db="EMBL/GenBank/DDBJ databases">
        <title>The rice genome contains at least two different genes encoding nucleic acid binding proteins.</title>
        <authorList>
            <person name="Yoon U.H."/>
            <person name="Hahn J.H."/>
            <person name="Yun C.-H."/>
            <person name="Eun M.Y."/>
        </authorList>
    </citation>
    <scope>NUCLEOTIDE SEQUENCE [MRNA]</scope>
    <source>
        <strain>cv. Ilpoombyeo</strain>
        <tissue>Seedling</tissue>
    </source>
</reference>
<reference key="2">
    <citation type="journal article" date="2002" name="Nature">
        <title>The genome sequence and structure of rice chromosome 1.</title>
        <authorList>
            <person name="Sasaki T."/>
            <person name="Matsumoto T."/>
            <person name="Yamamoto K."/>
            <person name="Sakata K."/>
            <person name="Baba T."/>
            <person name="Katayose Y."/>
            <person name="Wu J."/>
            <person name="Niimura Y."/>
            <person name="Cheng Z."/>
            <person name="Nagamura Y."/>
            <person name="Antonio B.A."/>
            <person name="Kanamori H."/>
            <person name="Hosokawa S."/>
            <person name="Masukawa M."/>
            <person name="Arikawa K."/>
            <person name="Chiden Y."/>
            <person name="Hayashi M."/>
            <person name="Okamoto M."/>
            <person name="Ando T."/>
            <person name="Aoki H."/>
            <person name="Arita K."/>
            <person name="Hamada M."/>
            <person name="Harada C."/>
            <person name="Hijishita S."/>
            <person name="Honda M."/>
            <person name="Ichikawa Y."/>
            <person name="Idonuma A."/>
            <person name="Iijima M."/>
            <person name="Ikeda M."/>
            <person name="Ikeno M."/>
            <person name="Ito S."/>
            <person name="Ito T."/>
            <person name="Ito Y."/>
            <person name="Ito Y."/>
            <person name="Iwabuchi A."/>
            <person name="Kamiya K."/>
            <person name="Karasawa W."/>
            <person name="Katagiri S."/>
            <person name="Kikuta A."/>
            <person name="Kobayashi N."/>
            <person name="Kono I."/>
            <person name="Machita K."/>
            <person name="Maehara T."/>
            <person name="Mizuno H."/>
            <person name="Mizubayashi T."/>
            <person name="Mukai Y."/>
            <person name="Nagasaki H."/>
            <person name="Nakashima M."/>
            <person name="Nakama Y."/>
            <person name="Nakamichi Y."/>
            <person name="Nakamura M."/>
            <person name="Namiki N."/>
            <person name="Negishi M."/>
            <person name="Ohta I."/>
            <person name="Ono N."/>
            <person name="Saji S."/>
            <person name="Sakai K."/>
            <person name="Shibata M."/>
            <person name="Shimokawa T."/>
            <person name="Shomura A."/>
            <person name="Song J."/>
            <person name="Takazaki Y."/>
            <person name="Terasawa K."/>
            <person name="Tsuji K."/>
            <person name="Waki K."/>
            <person name="Yamagata H."/>
            <person name="Yamane H."/>
            <person name="Yoshiki S."/>
            <person name="Yoshihara R."/>
            <person name="Yukawa K."/>
            <person name="Zhong H."/>
            <person name="Iwama H."/>
            <person name="Endo T."/>
            <person name="Ito H."/>
            <person name="Hahn J.H."/>
            <person name="Kim H.-I."/>
            <person name="Eun M.-Y."/>
            <person name="Yano M."/>
            <person name="Jiang J."/>
            <person name="Gojobori T."/>
        </authorList>
    </citation>
    <scope>NUCLEOTIDE SEQUENCE [LARGE SCALE GENOMIC DNA]</scope>
    <source>
        <strain>cv. Nipponbare</strain>
    </source>
</reference>
<reference key="3">
    <citation type="journal article" date="2005" name="Nature">
        <title>The map-based sequence of the rice genome.</title>
        <authorList>
            <consortium name="International rice genome sequencing project (IRGSP)"/>
        </authorList>
    </citation>
    <scope>NUCLEOTIDE SEQUENCE [LARGE SCALE GENOMIC DNA]</scope>
    <source>
        <strain>cv. Nipponbare</strain>
    </source>
</reference>
<reference key="4">
    <citation type="journal article" date="2008" name="Nucleic Acids Res.">
        <title>The rice annotation project database (RAP-DB): 2008 update.</title>
        <authorList>
            <consortium name="The rice annotation project (RAP)"/>
        </authorList>
    </citation>
    <scope>GENOME REANNOTATION</scope>
    <source>
        <strain>cv. Nipponbare</strain>
    </source>
</reference>
<reference key="5">
    <citation type="journal article" date="2013" name="Rice">
        <title>Improvement of the Oryza sativa Nipponbare reference genome using next generation sequence and optical map data.</title>
        <authorList>
            <person name="Kawahara Y."/>
            <person name="de la Bastide M."/>
            <person name="Hamilton J.P."/>
            <person name="Kanamori H."/>
            <person name="McCombie W.R."/>
            <person name="Ouyang S."/>
            <person name="Schwartz D.C."/>
            <person name="Tanaka T."/>
            <person name="Wu J."/>
            <person name="Zhou S."/>
            <person name="Childs K.L."/>
            <person name="Davidson R.M."/>
            <person name="Lin H."/>
            <person name="Quesada-Ocampo L."/>
            <person name="Vaillancourt B."/>
            <person name="Sakai H."/>
            <person name="Lee S.S."/>
            <person name="Kim J."/>
            <person name="Numa H."/>
            <person name="Itoh T."/>
            <person name="Buell C.R."/>
            <person name="Matsumoto T."/>
        </authorList>
    </citation>
    <scope>GENOME REANNOTATION</scope>
    <source>
        <strain>cv. Nipponbare</strain>
    </source>
</reference>
<reference key="6">
    <citation type="journal article" date="2005" name="PLoS Biol.">
        <title>The genomes of Oryza sativa: a history of duplications.</title>
        <authorList>
            <person name="Yu J."/>
            <person name="Wang J."/>
            <person name="Lin W."/>
            <person name="Li S."/>
            <person name="Li H."/>
            <person name="Zhou J."/>
            <person name="Ni P."/>
            <person name="Dong W."/>
            <person name="Hu S."/>
            <person name="Zeng C."/>
            <person name="Zhang J."/>
            <person name="Zhang Y."/>
            <person name="Li R."/>
            <person name="Xu Z."/>
            <person name="Li S."/>
            <person name="Li X."/>
            <person name="Zheng H."/>
            <person name="Cong L."/>
            <person name="Lin L."/>
            <person name="Yin J."/>
            <person name="Geng J."/>
            <person name="Li G."/>
            <person name="Shi J."/>
            <person name="Liu J."/>
            <person name="Lv H."/>
            <person name="Li J."/>
            <person name="Wang J."/>
            <person name="Deng Y."/>
            <person name="Ran L."/>
            <person name="Shi X."/>
            <person name="Wang X."/>
            <person name="Wu Q."/>
            <person name="Li C."/>
            <person name="Ren X."/>
            <person name="Wang J."/>
            <person name="Wang X."/>
            <person name="Li D."/>
            <person name="Liu D."/>
            <person name="Zhang X."/>
            <person name="Ji Z."/>
            <person name="Zhao W."/>
            <person name="Sun Y."/>
            <person name="Zhang Z."/>
            <person name="Bao J."/>
            <person name="Han Y."/>
            <person name="Dong L."/>
            <person name="Ji J."/>
            <person name="Chen P."/>
            <person name="Wu S."/>
            <person name="Liu J."/>
            <person name="Xiao Y."/>
            <person name="Bu D."/>
            <person name="Tan J."/>
            <person name="Yang L."/>
            <person name="Ye C."/>
            <person name="Zhang J."/>
            <person name="Xu J."/>
            <person name="Zhou Y."/>
            <person name="Yu Y."/>
            <person name="Zhang B."/>
            <person name="Zhuang S."/>
            <person name="Wei H."/>
            <person name="Liu B."/>
            <person name="Lei M."/>
            <person name="Yu H."/>
            <person name="Li Y."/>
            <person name="Xu H."/>
            <person name="Wei S."/>
            <person name="He X."/>
            <person name="Fang L."/>
            <person name="Zhang Z."/>
            <person name="Zhang Y."/>
            <person name="Huang X."/>
            <person name="Su Z."/>
            <person name="Tong W."/>
            <person name="Li J."/>
            <person name="Tong Z."/>
            <person name="Li S."/>
            <person name="Ye J."/>
            <person name="Wang L."/>
            <person name="Fang L."/>
            <person name="Lei T."/>
            <person name="Chen C.-S."/>
            <person name="Chen H.-C."/>
            <person name="Xu Z."/>
            <person name="Li H."/>
            <person name="Huang H."/>
            <person name="Zhang F."/>
            <person name="Xu H."/>
            <person name="Li N."/>
            <person name="Zhao C."/>
            <person name="Li S."/>
            <person name="Dong L."/>
            <person name="Huang Y."/>
            <person name="Li L."/>
            <person name="Xi Y."/>
            <person name="Qi Q."/>
            <person name="Li W."/>
            <person name="Zhang B."/>
            <person name="Hu W."/>
            <person name="Zhang Y."/>
            <person name="Tian X."/>
            <person name="Jiao Y."/>
            <person name="Liang X."/>
            <person name="Jin J."/>
            <person name="Gao L."/>
            <person name="Zheng W."/>
            <person name="Hao B."/>
            <person name="Liu S.-M."/>
            <person name="Wang W."/>
            <person name="Yuan L."/>
            <person name="Cao M."/>
            <person name="McDermott J."/>
            <person name="Samudrala R."/>
            <person name="Wang J."/>
            <person name="Wong G.K.-S."/>
            <person name="Yang H."/>
        </authorList>
    </citation>
    <scope>NUCLEOTIDE SEQUENCE [LARGE SCALE GENOMIC DNA]</scope>
    <source>
        <strain>cv. Nipponbare</strain>
    </source>
</reference>
<reference key="7">
    <citation type="journal article" date="2009" name="Plant J.">
        <title>Arabidopsis ING and Alfin1-like protein families localize to the nucleus and bind to H3K4me3/2 via plant homeodomain fingers.</title>
        <authorList>
            <person name="Lee W.Y."/>
            <person name="Lee D."/>
            <person name="Chung W.I."/>
            <person name="Kwon C.S."/>
        </authorList>
    </citation>
    <scope>GENE FAMILY</scope>
</reference>
<organism>
    <name type="scientific">Oryza sativa subsp. japonica</name>
    <name type="common">Rice</name>
    <dbReference type="NCBI Taxonomy" id="39947"/>
    <lineage>
        <taxon>Eukaryota</taxon>
        <taxon>Viridiplantae</taxon>
        <taxon>Streptophyta</taxon>
        <taxon>Embryophyta</taxon>
        <taxon>Tracheophyta</taxon>
        <taxon>Spermatophyta</taxon>
        <taxon>Magnoliopsida</taxon>
        <taxon>Liliopsida</taxon>
        <taxon>Poales</taxon>
        <taxon>Poaceae</taxon>
        <taxon>BOP clade</taxon>
        <taxon>Oryzoideae</taxon>
        <taxon>Oryzeae</taxon>
        <taxon>Oryzinae</taxon>
        <taxon>Oryza</taxon>
        <taxon>Oryza sativa</taxon>
    </lineage>
</organism>
<comment type="function">
    <text evidence="1">Histone-binding component that specifically recognizes H3 tails trimethylated on 'Lys-4' (H3K4me3), which mark transcription start sites of virtually all active genes.</text>
</comment>
<comment type="subcellular location">
    <subcellularLocation>
        <location evidence="1">Nucleus</location>
    </subcellularLocation>
</comment>
<comment type="domain">
    <text evidence="1">The PHD-type zinc finger mediates the binding to H3K4me3.</text>
</comment>
<comment type="similarity">
    <text evidence="4">Belongs to the Alfin family.</text>
</comment>
<comment type="caution">
    <text evidence="4">Lacks the Tyr (here Asp-226), a conserved feature of the aromatic cage required for the interaction with histone H3K4me3/2.</text>
</comment>
<proteinExistence type="evidence at transcript level"/>
<name>ALFL6_ORYSJ</name>
<feature type="chain" id="PRO_0000412947" description="PHD finger protein ALFIN-LIKE 6">
    <location>
        <begin position="1"/>
        <end position="272"/>
    </location>
</feature>
<feature type="zinc finger region" description="PHD-type" evidence="2">
    <location>
        <begin position="216"/>
        <end position="268"/>
    </location>
</feature>
<feature type="region of interest" description="Disordered" evidence="3">
    <location>
        <begin position="1"/>
        <end position="24"/>
    </location>
</feature>
<feature type="region of interest" description="Disordered" evidence="3">
    <location>
        <begin position="162"/>
        <end position="218"/>
    </location>
</feature>
<feature type="compositionally biased region" description="Gly residues" evidence="3">
    <location>
        <begin position="1"/>
        <end position="23"/>
    </location>
</feature>
<feature type="compositionally biased region" description="Low complexity" evidence="3">
    <location>
        <begin position="168"/>
        <end position="182"/>
    </location>
</feature>
<feature type="compositionally biased region" description="Basic and acidic residues" evidence="3">
    <location>
        <begin position="183"/>
        <end position="200"/>
    </location>
</feature>
<feature type="compositionally biased region" description="Acidic residues" evidence="3">
    <location>
        <begin position="201"/>
        <end position="214"/>
    </location>
</feature>
<feature type="site" description="Histone H3K4me3 binding" evidence="1">
    <location>
        <position position="232"/>
    </location>
</feature>
<feature type="site" description="Histone H3K4me3 binding" evidence="1">
    <location>
        <position position="236"/>
    </location>
</feature>
<feature type="site" description="Histone H3K4me3 binding" evidence="1">
    <location>
        <position position="241"/>
    </location>
</feature>
<gene>
    <name type="ordered locus">Os01g0887700</name>
    <name type="ordered locus">LOC_Os01g66420</name>
    <name type="ORF">B1099D03.10</name>
    <name type="ORF">OsJ_04343</name>
    <name type="ORF">P0434C04.30</name>
</gene>
<accession>Q7F2Z1</accession>
<accession>A0A0P0VBC6</accession>
<accession>O49228</accession>
<dbReference type="EMBL" id="AF047428">
    <property type="protein sequence ID" value="AAC98969.1"/>
    <property type="molecule type" value="mRNA"/>
</dbReference>
<dbReference type="EMBL" id="AP003346">
    <property type="protein sequence ID" value="BAD82135.1"/>
    <property type="molecule type" value="Genomic_DNA"/>
</dbReference>
<dbReference type="EMBL" id="AP003431">
    <property type="protein sequence ID" value="BAB92630.1"/>
    <property type="molecule type" value="Genomic_DNA"/>
</dbReference>
<dbReference type="EMBL" id="AP008207">
    <property type="protein sequence ID" value="BAF06950.1"/>
    <property type="molecule type" value="Genomic_DNA"/>
</dbReference>
<dbReference type="EMBL" id="AP014957">
    <property type="protein sequence ID" value="BAS75622.1"/>
    <property type="molecule type" value="Genomic_DNA"/>
</dbReference>
<dbReference type="EMBL" id="CM000138">
    <property type="protein sequence ID" value="EAZ14421.1"/>
    <property type="molecule type" value="Genomic_DNA"/>
</dbReference>
<dbReference type="PIR" id="T02745">
    <property type="entry name" value="T02745"/>
</dbReference>
<dbReference type="RefSeq" id="XP_015621936.1">
    <property type="nucleotide sequence ID" value="XM_015766450.1"/>
</dbReference>
<dbReference type="SMR" id="Q7F2Z1"/>
<dbReference type="FunCoup" id="Q7F2Z1">
    <property type="interactions" value="281"/>
</dbReference>
<dbReference type="STRING" id="39947.Q7F2Z1"/>
<dbReference type="PaxDb" id="39947-Q7F2Z1"/>
<dbReference type="EnsemblPlants" id="Os01t0887700-01">
    <property type="protein sequence ID" value="Os01t0887700-01"/>
    <property type="gene ID" value="Os01g0887700"/>
</dbReference>
<dbReference type="Gramene" id="Os01t0887700-01">
    <property type="protein sequence ID" value="Os01t0887700-01"/>
    <property type="gene ID" value="Os01g0887700"/>
</dbReference>
<dbReference type="KEGG" id="dosa:Os01g0887700"/>
<dbReference type="eggNOG" id="KOG1632">
    <property type="taxonomic scope" value="Eukaryota"/>
</dbReference>
<dbReference type="HOGENOM" id="CLU_058315_0_0_1"/>
<dbReference type="InParanoid" id="Q7F2Z1"/>
<dbReference type="OMA" id="HMINDLP"/>
<dbReference type="OrthoDB" id="436852at2759"/>
<dbReference type="Proteomes" id="UP000000763">
    <property type="component" value="Chromosome 1"/>
</dbReference>
<dbReference type="Proteomes" id="UP000007752">
    <property type="component" value="Chromosome 1"/>
</dbReference>
<dbReference type="Proteomes" id="UP000059680">
    <property type="component" value="Chromosome 1"/>
</dbReference>
<dbReference type="ExpressionAtlas" id="Q7F2Z1">
    <property type="expression patterns" value="baseline and differential"/>
</dbReference>
<dbReference type="GO" id="GO:0005634">
    <property type="term" value="C:nucleus"/>
    <property type="evidence" value="ECO:0000318"/>
    <property type="project" value="GO_Central"/>
</dbReference>
<dbReference type="GO" id="GO:0042393">
    <property type="term" value="F:histone binding"/>
    <property type="evidence" value="ECO:0007669"/>
    <property type="project" value="InterPro"/>
</dbReference>
<dbReference type="GO" id="GO:0000976">
    <property type="term" value="F:transcription cis-regulatory region binding"/>
    <property type="evidence" value="ECO:0000318"/>
    <property type="project" value="GO_Central"/>
</dbReference>
<dbReference type="GO" id="GO:0003712">
    <property type="term" value="F:transcription coregulator activity"/>
    <property type="evidence" value="ECO:0000318"/>
    <property type="project" value="GO_Central"/>
</dbReference>
<dbReference type="GO" id="GO:0008270">
    <property type="term" value="F:zinc ion binding"/>
    <property type="evidence" value="ECO:0007669"/>
    <property type="project" value="UniProtKB-KW"/>
</dbReference>
<dbReference type="GO" id="GO:0006325">
    <property type="term" value="P:chromatin organization"/>
    <property type="evidence" value="ECO:0007669"/>
    <property type="project" value="UniProtKB-KW"/>
</dbReference>
<dbReference type="GO" id="GO:0006355">
    <property type="term" value="P:regulation of DNA-templated transcription"/>
    <property type="evidence" value="ECO:0007669"/>
    <property type="project" value="InterPro"/>
</dbReference>
<dbReference type="CDD" id="cd15613">
    <property type="entry name" value="PHD_AL_plant"/>
    <property type="match status" value="1"/>
</dbReference>
<dbReference type="FunFam" id="3.30.40.10:FF:000306">
    <property type="entry name" value="PHD finger alfin-like protein"/>
    <property type="match status" value="1"/>
</dbReference>
<dbReference type="Gene3D" id="3.30.40.10">
    <property type="entry name" value="Zinc/RING finger domain, C3HC4 (zinc finger)"/>
    <property type="match status" value="1"/>
</dbReference>
<dbReference type="InterPro" id="IPR045104">
    <property type="entry name" value="Alfin"/>
</dbReference>
<dbReference type="InterPro" id="IPR021998">
    <property type="entry name" value="Alfin_N"/>
</dbReference>
<dbReference type="InterPro" id="IPR044104">
    <property type="entry name" value="PHD_AL_plant"/>
</dbReference>
<dbReference type="InterPro" id="IPR019786">
    <property type="entry name" value="Zinc_finger_PHD-type_CS"/>
</dbReference>
<dbReference type="InterPro" id="IPR011011">
    <property type="entry name" value="Znf_FYVE_PHD"/>
</dbReference>
<dbReference type="InterPro" id="IPR001965">
    <property type="entry name" value="Znf_PHD"/>
</dbReference>
<dbReference type="InterPro" id="IPR019787">
    <property type="entry name" value="Znf_PHD-finger"/>
</dbReference>
<dbReference type="InterPro" id="IPR013083">
    <property type="entry name" value="Znf_RING/FYVE/PHD"/>
</dbReference>
<dbReference type="PANTHER" id="PTHR12321">
    <property type="entry name" value="CPG BINDING PROTEIN"/>
    <property type="match status" value="1"/>
</dbReference>
<dbReference type="PANTHER" id="PTHR12321:SF77">
    <property type="entry name" value="PHD FINGER PROTEIN ALFIN-LIKE 6"/>
    <property type="match status" value="1"/>
</dbReference>
<dbReference type="Pfam" id="PF12165">
    <property type="entry name" value="Alfin"/>
    <property type="match status" value="1"/>
</dbReference>
<dbReference type="Pfam" id="PF00628">
    <property type="entry name" value="PHD"/>
    <property type="match status" value="1"/>
</dbReference>
<dbReference type="SMART" id="SM00249">
    <property type="entry name" value="PHD"/>
    <property type="match status" value="1"/>
</dbReference>
<dbReference type="SUPFAM" id="SSF57903">
    <property type="entry name" value="FYVE/PHD zinc finger"/>
    <property type="match status" value="1"/>
</dbReference>
<dbReference type="PROSITE" id="PS01359">
    <property type="entry name" value="ZF_PHD_1"/>
    <property type="match status" value="1"/>
</dbReference>
<dbReference type="PROSITE" id="PS50016">
    <property type="entry name" value="ZF_PHD_2"/>
    <property type="match status" value="1"/>
</dbReference>
<evidence type="ECO:0000250" key="1"/>
<evidence type="ECO:0000255" key="2">
    <source>
        <dbReference type="PROSITE-ProRule" id="PRU00146"/>
    </source>
</evidence>
<evidence type="ECO:0000256" key="3">
    <source>
        <dbReference type="SAM" id="MobiDB-lite"/>
    </source>
</evidence>
<evidence type="ECO:0000305" key="4"/>
<sequence length="272" mass="29604">MEGGGGGGGGGGGGGGGGGGGGAPYATRTAEEVFRDLRGRRAGMIKALTTDVEKFYKLCDPEKENLCLYGYPNETWEVTLPAEEVPPEIPEPALGINFARDGMNEKDWLALVAVHSDSWLLSVAFYFGARFGFDREARRRLFNMINNLPTIFEVVTGAAKKQAKEKTPNSSSKSNKPSSKVQSKAESRSKSKLSAPKDEEGSGDDEGEEEEDDHDNTLCGTCGTNDGKDEFWICCDNCEKWYHGKCVKITPARAEHIKQYKCPDCTNKRARA</sequence>